<evidence type="ECO:0000250" key="1"/>
<evidence type="ECO:0000255" key="2"/>
<evidence type="ECO:0000305" key="3"/>
<name>DRL2_ARATH</name>
<comment type="function">
    <text evidence="1">Probable disease resistance protein.</text>
</comment>
<comment type="alternative products">
    <event type="alternative splicing"/>
    <isoform>
        <id>P60839-1</id>
        <name>1</name>
        <sequence type="displayed"/>
    </isoform>
    <text>A number of isoforms are produced. According to EST sequences.</text>
</comment>
<comment type="domain">
    <text evidence="1">The LRR repeats probably act as specificity determinant of pathogen recognition.</text>
</comment>
<comment type="similarity">
    <text evidence="3">Belongs to the disease resistance NB-LRR family.</text>
</comment>
<comment type="sequence caution" evidence="3">
    <conflict type="erroneous gene model prediction">
        <sequence resource="EMBL-CDS" id="AAF79659"/>
    </conflict>
</comment>
<comment type="online information" name="NIB-LRRS">
    <link uri="http://niblrrs.ucdavis.edu"/>
    <text>Functional and comparative genomics of disease resistance gene homologs</text>
</comment>
<gene>
    <name type="ordered locus">At1g12290</name>
    <name type="ORF">F5O11.3</name>
</gene>
<keyword id="KW-0025">Alternative splicing</keyword>
<keyword id="KW-0067">ATP-binding</keyword>
<keyword id="KW-0175">Coiled coil</keyword>
<keyword id="KW-0433">Leucine-rich repeat</keyword>
<keyword id="KW-0547">Nucleotide-binding</keyword>
<keyword id="KW-0611">Plant defense</keyword>
<keyword id="KW-1185">Reference proteome</keyword>
<keyword id="KW-0677">Repeat</keyword>
<dbReference type="EMBL" id="AC025416">
    <property type="protein sequence ID" value="AAF79659.1"/>
    <property type="status" value="ALT_SEQ"/>
    <property type="molecule type" value="Genomic_DNA"/>
</dbReference>
<dbReference type="EMBL" id="CP002684">
    <property type="protein sequence ID" value="AEE28862.1"/>
    <property type="molecule type" value="Genomic_DNA"/>
</dbReference>
<dbReference type="RefSeq" id="NP_172693.1">
    <molecule id="P60839-1"/>
    <property type="nucleotide sequence ID" value="NM_101101.5"/>
</dbReference>
<dbReference type="SMR" id="P60839"/>
<dbReference type="FunCoup" id="P60839">
    <property type="interactions" value="29"/>
</dbReference>
<dbReference type="STRING" id="3702.P60839"/>
<dbReference type="PaxDb" id="3702-AT1G12290.1"/>
<dbReference type="ProteomicsDB" id="224327">
    <molecule id="P60839-1"/>
</dbReference>
<dbReference type="EnsemblPlants" id="AT1G12290.1">
    <molecule id="P60839-1"/>
    <property type="protein sequence ID" value="AT1G12290.1"/>
    <property type="gene ID" value="AT1G12290"/>
</dbReference>
<dbReference type="GeneID" id="837783"/>
<dbReference type="Gramene" id="AT1G12290.1">
    <molecule id="P60839-1"/>
    <property type="protein sequence ID" value="AT1G12290.1"/>
    <property type="gene ID" value="AT1G12290"/>
</dbReference>
<dbReference type="KEGG" id="ath:AT1G12290"/>
<dbReference type="Araport" id="AT1G12290"/>
<dbReference type="TAIR" id="AT1G12290"/>
<dbReference type="eggNOG" id="KOG4658">
    <property type="taxonomic scope" value="Eukaryota"/>
</dbReference>
<dbReference type="InParanoid" id="P60839"/>
<dbReference type="OMA" id="IMIERNT"/>
<dbReference type="PhylomeDB" id="P60839"/>
<dbReference type="PRO" id="PR:P60839"/>
<dbReference type="Proteomes" id="UP000006548">
    <property type="component" value="Chromosome 1"/>
</dbReference>
<dbReference type="ExpressionAtlas" id="P60839">
    <property type="expression patterns" value="baseline and differential"/>
</dbReference>
<dbReference type="GO" id="GO:0005886">
    <property type="term" value="C:plasma membrane"/>
    <property type="evidence" value="ECO:0000314"/>
    <property type="project" value="TAIR"/>
</dbReference>
<dbReference type="GO" id="GO:0043531">
    <property type="term" value="F:ADP binding"/>
    <property type="evidence" value="ECO:0007669"/>
    <property type="project" value="InterPro"/>
</dbReference>
<dbReference type="GO" id="GO:0005524">
    <property type="term" value="F:ATP binding"/>
    <property type="evidence" value="ECO:0007669"/>
    <property type="project" value="UniProtKB-KW"/>
</dbReference>
<dbReference type="GO" id="GO:0006952">
    <property type="term" value="P:defense response"/>
    <property type="evidence" value="ECO:0007669"/>
    <property type="project" value="UniProtKB-KW"/>
</dbReference>
<dbReference type="FunFam" id="3.80.10.10:FF:001429">
    <property type="entry name" value="Probable disease resistance protein At1g61190"/>
    <property type="match status" value="1"/>
</dbReference>
<dbReference type="FunFam" id="3.40.50.300:FF:001091">
    <property type="entry name" value="Probable disease resistance protein At1g61300"/>
    <property type="match status" value="1"/>
</dbReference>
<dbReference type="FunFam" id="1.10.10.10:FF:000322">
    <property type="entry name" value="Probable disease resistance protein At1g63360"/>
    <property type="match status" value="1"/>
</dbReference>
<dbReference type="FunFam" id="1.10.8.430:FF:000003">
    <property type="entry name" value="Probable disease resistance protein At5g66910"/>
    <property type="match status" value="1"/>
</dbReference>
<dbReference type="Gene3D" id="1.10.8.430">
    <property type="entry name" value="Helical domain of apoptotic protease-activating factors"/>
    <property type="match status" value="1"/>
</dbReference>
<dbReference type="Gene3D" id="3.40.50.300">
    <property type="entry name" value="P-loop containing nucleotide triphosphate hydrolases"/>
    <property type="match status" value="1"/>
</dbReference>
<dbReference type="Gene3D" id="3.80.10.10">
    <property type="entry name" value="Ribonuclease Inhibitor"/>
    <property type="match status" value="2"/>
</dbReference>
<dbReference type="Gene3D" id="1.10.10.10">
    <property type="entry name" value="Winged helix-like DNA-binding domain superfamily/Winged helix DNA-binding domain"/>
    <property type="match status" value="1"/>
</dbReference>
<dbReference type="InterPro" id="IPR042197">
    <property type="entry name" value="Apaf_helical"/>
</dbReference>
<dbReference type="InterPro" id="IPR032675">
    <property type="entry name" value="LRR_dom_sf"/>
</dbReference>
<dbReference type="InterPro" id="IPR055414">
    <property type="entry name" value="LRR_R13L4/SHOC2-like"/>
</dbReference>
<dbReference type="InterPro" id="IPR002182">
    <property type="entry name" value="NB-ARC"/>
</dbReference>
<dbReference type="InterPro" id="IPR027417">
    <property type="entry name" value="P-loop_NTPase"/>
</dbReference>
<dbReference type="InterPro" id="IPR050905">
    <property type="entry name" value="Plant_NBS-LRR"/>
</dbReference>
<dbReference type="InterPro" id="IPR036388">
    <property type="entry name" value="WH-like_DNA-bd_sf"/>
</dbReference>
<dbReference type="PANTHER" id="PTHR33463:SF220">
    <property type="entry name" value="NB-ARC DOMAIN-CONTAINING PROTEIN"/>
    <property type="match status" value="1"/>
</dbReference>
<dbReference type="PANTHER" id="PTHR33463">
    <property type="entry name" value="NB-ARC DOMAIN-CONTAINING PROTEIN-RELATED"/>
    <property type="match status" value="1"/>
</dbReference>
<dbReference type="Pfam" id="PF23598">
    <property type="entry name" value="LRR_14"/>
    <property type="match status" value="1"/>
</dbReference>
<dbReference type="Pfam" id="PF00931">
    <property type="entry name" value="NB-ARC"/>
    <property type="match status" value="1"/>
</dbReference>
<dbReference type="Pfam" id="PF23559">
    <property type="entry name" value="WH_DRP"/>
    <property type="match status" value="1"/>
</dbReference>
<dbReference type="PRINTS" id="PR00364">
    <property type="entry name" value="DISEASERSIST"/>
</dbReference>
<dbReference type="SUPFAM" id="SSF52058">
    <property type="entry name" value="L domain-like"/>
    <property type="match status" value="1"/>
</dbReference>
<dbReference type="SUPFAM" id="SSF52540">
    <property type="entry name" value="P-loop containing nucleoside triphosphate hydrolases"/>
    <property type="match status" value="1"/>
</dbReference>
<feature type="chain" id="PRO_0000212734" description="Probable disease resistance protein At1g12290">
    <location>
        <begin position="1"/>
        <end position="884"/>
    </location>
</feature>
<feature type="domain" description="NB-ARC">
    <location>
        <begin position="139"/>
        <end position="443"/>
    </location>
</feature>
<feature type="repeat" description="LRR 1">
    <location>
        <begin position="519"/>
        <end position="540"/>
    </location>
</feature>
<feature type="repeat" description="LRR 2">
    <location>
        <begin position="541"/>
        <end position="563"/>
    </location>
</feature>
<feature type="repeat" description="LRR 3">
    <location>
        <begin position="566"/>
        <end position="588"/>
    </location>
</feature>
<feature type="repeat" description="LRR 4">
    <location>
        <begin position="590"/>
        <end position="612"/>
    </location>
</feature>
<feature type="repeat" description="LRR 5">
    <location>
        <begin position="613"/>
        <end position="635"/>
    </location>
</feature>
<feature type="repeat" description="LRR 6">
    <location>
        <begin position="644"/>
        <end position="664"/>
    </location>
</feature>
<feature type="coiled-coil region" evidence="2">
    <location>
        <begin position="26"/>
        <end position="66"/>
    </location>
</feature>
<feature type="binding site" evidence="2">
    <location>
        <begin position="182"/>
        <end position="189"/>
    </location>
    <ligand>
        <name>ATP</name>
        <dbReference type="ChEBI" id="CHEBI:30616"/>
    </ligand>
</feature>
<reference key="1">
    <citation type="journal article" date="2000" name="Nature">
        <title>Sequence and analysis of chromosome 1 of the plant Arabidopsis thaliana.</title>
        <authorList>
            <person name="Theologis A."/>
            <person name="Ecker J.R."/>
            <person name="Palm C.J."/>
            <person name="Federspiel N.A."/>
            <person name="Kaul S."/>
            <person name="White O."/>
            <person name="Alonso J."/>
            <person name="Altafi H."/>
            <person name="Araujo R."/>
            <person name="Bowman C.L."/>
            <person name="Brooks S.Y."/>
            <person name="Buehler E."/>
            <person name="Chan A."/>
            <person name="Chao Q."/>
            <person name="Chen H."/>
            <person name="Cheuk R.F."/>
            <person name="Chin C.W."/>
            <person name="Chung M.K."/>
            <person name="Conn L."/>
            <person name="Conway A.B."/>
            <person name="Conway A.R."/>
            <person name="Creasy T.H."/>
            <person name="Dewar K."/>
            <person name="Dunn P."/>
            <person name="Etgu P."/>
            <person name="Feldblyum T.V."/>
            <person name="Feng J.-D."/>
            <person name="Fong B."/>
            <person name="Fujii C.Y."/>
            <person name="Gill J.E."/>
            <person name="Goldsmith A.D."/>
            <person name="Haas B."/>
            <person name="Hansen N.F."/>
            <person name="Hughes B."/>
            <person name="Huizar L."/>
            <person name="Hunter J.L."/>
            <person name="Jenkins J."/>
            <person name="Johnson-Hopson C."/>
            <person name="Khan S."/>
            <person name="Khaykin E."/>
            <person name="Kim C.J."/>
            <person name="Koo H.L."/>
            <person name="Kremenetskaia I."/>
            <person name="Kurtz D.B."/>
            <person name="Kwan A."/>
            <person name="Lam B."/>
            <person name="Langin-Hooper S."/>
            <person name="Lee A."/>
            <person name="Lee J.M."/>
            <person name="Lenz C.A."/>
            <person name="Li J.H."/>
            <person name="Li Y.-P."/>
            <person name="Lin X."/>
            <person name="Liu S.X."/>
            <person name="Liu Z.A."/>
            <person name="Luros J.S."/>
            <person name="Maiti R."/>
            <person name="Marziali A."/>
            <person name="Militscher J."/>
            <person name="Miranda M."/>
            <person name="Nguyen M."/>
            <person name="Nierman W.C."/>
            <person name="Osborne B.I."/>
            <person name="Pai G."/>
            <person name="Peterson J."/>
            <person name="Pham P.K."/>
            <person name="Rizzo M."/>
            <person name="Rooney T."/>
            <person name="Rowley D."/>
            <person name="Sakano H."/>
            <person name="Salzberg S.L."/>
            <person name="Schwartz J.R."/>
            <person name="Shinn P."/>
            <person name="Southwick A.M."/>
            <person name="Sun H."/>
            <person name="Tallon L.J."/>
            <person name="Tambunga G."/>
            <person name="Toriumi M.J."/>
            <person name="Town C.D."/>
            <person name="Utterback T."/>
            <person name="Van Aken S."/>
            <person name="Vaysberg M."/>
            <person name="Vysotskaia V.S."/>
            <person name="Walker M."/>
            <person name="Wu D."/>
            <person name="Yu G."/>
            <person name="Fraser C.M."/>
            <person name="Venter J.C."/>
            <person name="Davis R.W."/>
        </authorList>
    </citation>
    <scope>NUCLEOTIDE SEQUENCE [LARGE SCALE GENOMIC DNA]</scope>
    <source>
        <strain>cv. Columbia</strain>
    </source>
</reference>
<reference key="2">
    <citation type="journal article" date="2017" name="Plant J.">
        <title>Araport11: a complete reannotation of the Arabidopsis thaliana reference genome.</title>
        <authorList>
            <person name="Cheng C.Y."/>
            <person name="Krishnakumar V."/>
            <person name="Chan A.P."/>
            <person name="Thibaud-Nissen F."/>
            <person name="Schobel S."/>
            <person name="Town C.D."/>
        </authorList>
    </citation>
    <scope>GENOME REANNOTATION</scope>
    <source>
        <strain>cv. Columbia</strain>
    </source>
</reference>
<protein>
    <recommendedName>
        <fullName>Probable disease resistance protein At1g12290</fullName>
    </recommendedName>
</protein>
<accession>P60839</accession>
<accession>Q9LNB5</accession>
<proteinExistence type="inferred from homology"/>
<sequence>MGGCVSVQVSCDQLLNHLGRCFCRKLYYIQNIKENLTSLEEAMEDLKALRDDLLRKVQTAEEGGLQRLHQIKVWLKRVKTIESQFNDLDSSRTVELQRLCCCGVGSRNLRLSYDYGRRVFLMLNIVEDLKSKGIFEEVAHPATRAVGEERPLQPTIVGQETILEKAWDHLMDDGTKIMGLYGMGGVGKTTLLTQINNRFCDTDDGVEIVIWVVVSGDLQIHKIQKEIGEKIGFIGVEWNQKSENQKAVDILNFLSKKRFVLLLDDIWKRVELTEIGIPNPTSENGCKIAFTTRCQSVCASMGVHDPMEVRCLGADDAWDLFKKKVGDITLSSHPDIPEIARKVAQACCGLPLALNVIGETMACKKTTQEWDRAVDVSTTYAANFGAVKERILPILKYSYDNLESESVKTCFLYCSLFPEDDLIEKERLIDYWICEGFIDGDENKKGAVGEGYEILGTLVCASLLVEGGKFNNKSYVKMHDVVREMALWIASDLRKHKDNCIVRAGFRLNEIPKVKDWKVVSRMSLVNNRIKEIHGSPECPKLTTLFLQDNRHLVNISGEFFRSMPRLVVLDLSWNVNLSGLPDQISELVSLRYLDLSYSSIGRLPVGLLKLKKLMHLNLESMLCLESVSGIDHLSNLKTVRLLNLRMWLTISLLEELERLENLEVLTIEIISSSALEQLLCSHRLVRCLQKVSVKYLDEESVRILTLPSIGDLREVFIGGCGMRDIIIERNTSLTSPCFPNLSKVLITGCNGLKDLTWLLFAPNLTHLNVWNSRQIEEIISQEKASTADIVPFRKLEYLHLWDLPELKSIYWNPLPFPCLNQINVQNKCRKLTKLPLDSQSCIVAGEELVIQYGDEEWKERVEWEDKATRLRFLPSCKLVLCNR</sequence>
<organism>
    <name type="scientific">Arabidopsis thaliana</name>
    <name type="common">Mouse-ear cress</name>
    <dbReference type="NCBI Taxonomy" id="3702"/>
    <lineage>
        <taxon>Eukaryota</taxon>
        <taxon>Viridiplantae</taxon>
        <taxon>Streptophyta</taxon>
        <taxon>Embryophyta</taxon>
        <taxon>Tracheophyta</taxon>
        <taxon>Spermatophyta</taxon>
        <taxon>Magnoliopsida</taxon>
        <taxon>eudicotyledons</taxon>
        <taxon>Gunneridae</taxon>
        <taxon>Pentapetalae</taxon>
        <taxon>rosids</taxon>
        <taxon>malvids</taxon>
        <taxon>Brassicales</taxon>
        <taxon>Brassicaceae</taxon>
        <taxon>Camelineae</taxon>
        <taxon>Arabidopsis</taxon>
    </lineage>
</organism>